<gene>
    <name evidence="1" type="primary">murB</name>
    <name type="ordered locus">DVU_2502</name>
</gene>
<reference key="1">
    <citation type="journal article" date="2004" name="Nat. Biotechnol.">
        <title>The genome sequence of the anaerobic, sulfate-reducing bacterium Desulfovibrio vulgaris Hildenborough.</title>
        <authorList>
            <person name="Heidelberg J.F."/>
            <person name="Seshadri R."/>
            <person name="Haveman S.A."/>
            <person name="Hemme C.L."/>
            <person name="Paulsen I.T."/>
            <person name="Kolonay J.F."/>
            <person name="Eisen J.A."/>
            <person name="Ward N.L."/>
            <person name="Methe B.A."/>
            <person name="Brinkac L.M."/>
            <person name="Daugherty S.C."/>
            <person name="DeBoy R.T."/>
            <person name="Dodson R.J."/>
            <person name="Durkin A.S."/>
            <person name="Madupu R."/>
            <person name="Nelson W.C."/>
            <person name="Sullivan S.A."/>
            <person name="Fouts D.E."/>
            <person name="Haft D.H."/>
            <person name="Selengut J."/>
            <person name="Peterson J.D."/>
            <person name="Davidsen T.M."/>
            <person name="Zafar N."/>
            <person name="Zhou L."/>
            <person name="Radune D."/>
            <person name="Dimitrov G."/>
            <person name="Hance M."/>
            <person name="Tran K."/>
            <person name="Khouri H.M."/>
            <person name="Gill J."/>
            <person name="Utterback T.R."/>
            <person name="Feldblyum T.V."/>
            <person name="Wall J.D."/>
            <person name="Voordouw G."/>
            <person name="Fraser C.M."/>
        </authorList>
    </citation>
    <scope>NUCLEOTIDE SEQUENCE [LARGE SCALE GENOMIC DNA]</scope>
    <source>
        <strain>ATCC 29579 / DSM 644 / CCUG 34227 / NCIMB 8303 / VKM B-1760 / Hildenborough</strain>
    </source>
</reference>
<protein>
    <recommendedName>
        <fullName evidence="1">UDP-N-acetylenolpyruvoylglucosamine reductase</fullName>
        <ecNumber evidence="1">1.3.1.98</ecNumber>
    </recommendedName>
    <alternativeName>
        <fullName evidence="1">UDP-N-acetylmuramate dehydrogenase</fullName>
    </alternativeName>
</protein>
<name>MURB_NITV2</name>
<dbReference type="EC" id="1.3.1.98" evidence="1"/>
<dbReference type="EMBL" id="AE017285">
    <property type="protein sequence ID" value="AAS96974.1"/>
    <property type="molecule type" value="Genomic_DNA"/>
</dbReference>
<dbReference type="RefSeq" id="WP_010939772.1">
    <property type="nucleotide sequence ID" value="NC_002937.3"/>
</dbReference>
<dbReference type="RefSeq" id="YP_011714.1">
    <property type="nucleotide sequence ID" value="NC_002937.3"/>
</dbReference>
<dbReference type="SMR" id="Q728V0"/>
<dbReference type="IntAct" id="Q728V0">
    <property type="interactions" value="1"/>
</dbReference>
<dbReference type="STRING" id="882.DVU_2502"/>
<dbReference type="PaxDb" id="882-DVU_2502"/>
<dbReference type="EnsemblBacteria" id="AAS96974">
    <property type="protein sequence ID" value="AAS96974"/>
    <property type="gene ID" value="DVU_2502"/>
</dbReference>
<dbReference type="KEGG" id="dvu:DVU_2502"/>
<dbReference type="PATRIC" id="fig|882.5.peg.2262"/>
<dbReference type="eggNOG" id="COG0812">
    <property type="taxonomic scope" value="Bacteria"/>
</dbReference>
<dbReference type="HOGENOM" id="CLU_035304_1_1_7"/>
<dbReference type="OrthoDB" id="9804753at2"/>
<dbReference type="PhylomeDB" id="Q728V0"/>
<dbReference type="UniPathway" id="UPA00219"/>
<dbReference type="Proteomes" id="UP000002194">
    <property type="component" value="Chromosome"/>
</dbReference>
<dbReference type="GO" id="GO:0005829">
    <property type="term" value="C:cytosol"/>
    <property type="evidence" value="ECO:0007669"/>
    <property type="project" value="TreeGrafter"/>
</dbReference>
<dbReference type="GO" id="GO:0071949">
    <property type="term" value="F:FAD binding"/>
    <property type="evidence" value="ECO:0007669"/>
    <property type="project" value="InterPro"/>
</dbReference>
<dbReference type="GO" id="GO:0008762">
    <property type="term" value="F:UDP-N-acetylmuramate dehydrogenase activity"/>
    <property type="evidence" value="ECO:0007669"/>
    <property type="project" value="UniProtKB-UniRule"/>
</dbReference>
<dbReference type="GO" id="GO:0051301">
    <property type="term" value="P:cell division"/>
    <property type="evidence" value="ECO:0007669"/>
    <property type="project" value="UniProtKB-KW"/>
</dbReference>
<dbReference type="GO" id="GO:0071555">
    <property type="term" value="P:cell wall organization"/>
    <property type="evidence" value="ECO:0007669"/>
    <property type="project" value="UniProtKB-KW"/>
</dbReference>
<dbReference type="GO" id="GO:0009252">
    <property type="term" value="P:peptidoglycan biosynthetic process"/>
    <property type="evidence" value="ECO:0007669"/>
    <property type="project" value="UniProtKB-UniRule"/>
</dbReference>
<dbReference type="GO" id="GO:0008360">
    <property type="term" value="P:regulation of cell shape"/>
    <property type="evidence" value="ECO:0007669"/>
    <property type="project" value="UniProtKB-KW"/>
</dbReference>
<dbReference type="Gene3D" id="3.30.465.10">
    <property type="match status" value="1"/>
</dbReference>
<dbReference type="Gene3D" id="3.90.78.10">
    <property type="entry name" value="UDP-N-acetylenolpyruvoylglucosamine reductase, C-terminal domain"/>
    <property type="match status" value="1"/>
</dbReference>
<dbReference type="Gene3D" id="3.30.43.10">
    <property type="entry name" value="Uridine Diphospho-n-acetylenolpyruvylglucosamine Reductase, domain 2"/>
    <property type="match status" value="1"/>
</dbReference>
<dbReference type="HAMAP" id="MF_00037">
    <property type="entry name" value="MurB"/>
    <property type="match status" value="1"/>
</dbReference>
<dbReference type="InterPro" id="IPR016166">
    <property type="entry name" value="FAD-bd_PCMH"/>
</dbReference>
<dbReference type="InterPro" id="IPR036318">
    <property type="entry name" value="FAD-bd_PCMH-like_sf"/>
</dbReference>
<dbReference type="InterPro" id="IPR016167">
    <property type="entry name" value="FAD-bd_PCMH_sub1"/>
</dbReference>
<dbReference type="InterPro" id="IPR016169">
    <property type="entry name" value="FAD-bd_PCMH_sub2"/>
</dbReference>
<dbReference type="InterPro" id="IPR003170">
    <property type="entry name" value="MurB"/>
</dbReference>
<dbReference type="InterPro" id="IPR011601">
    <property type="entry name" value="MurB_C"/>
</dbReference>
<dbReference type="InterPro" id="IPR036635">
    <property type="entry name" value="MurB_C_sf"/>
</dbReference>
<dbReference type="InterPro" id="IPR006094">
    <property type="entry name" value="Oxid_FAD_bind_N"/>
</dbReference>
<dbReference type="NCBIfam" id="TIGR00179">
    <property type="entry name" value="murB"/>
    <property type="match status" value="1"/>
</dbReference>
<dbReference type="PANTHER" id="PTHR21071">
    <property type="entry name" value="UDP-N-ACETYLENOLPYRUVOYLGLUCOSAMINE REDUCTASE"/>
    <property type="match status" value="1"/>
</dbReference>
<dbReference type="PANTHER" id="PTHR21071:SF4">
    <property type="entry name" value="UDP-N-ACETYLENOLPYRUVOYLGLUCOSAMINE REDUCTASE"/>
    <property type="match status" value="1"/>
</dbReference>
<dbReference type="Pfam" id="PF01565">
    <property type="entry name" value="FAD_binding_4"/>
    <property type="match status" value="1"/>
</dbReference>
<dbReference type="Pfam" id="PF02873">
    <property type="entry name" value="MurB_C"/>
    <property type="match status" value="1"/>
</dbReference>
<dbReference type="SUPFAM" id="SSF56176">
    <property type="entry name" value="FAD-binding/transporter-associated domain-like"/>
    <property type="match status" value="1"/>
</dbReference>
<dbReference type="SUPFAM" id="SSF56194">
    <property type="entry name" value="Uridine diphospho-N-Acetylenolpyruvylglucosamine reductase, MurB, C-terminal domain"/>
    <property type="match status" value="1"/>
</dbReference>
<dbReference type="PROSITE" id="PS51387">
    <property type="entry name" value="FAD_PCMH"/>
    <property type="match status" value="1"/>
</dbReference>
<sequence length="296" mass="31073">MLKVLEGPSLAERTTLRLGGRALAEVRVTSRDALDDLPGVLQCLGGSPLMLGCGSNILAADGELPVVVVSLDMDDAPTIVGETAEGVVVRVGAATRLPRLLGQLASWGLAGLEGLAGIPGSVGGAVAMNAGSYGCEFGTVLRSVEVFSPDFGLADVPHENIEYAYRHFGLKGCHGWFVVTGADIVLRRGESAAITAAMRANYLKKKSTQPVLARSAGCVFRNPAPGVSAGRLIDQAGLRGKRIGGMAFSEVHANFLVNEGAGRSDEAFELLQLAQEIVKRRHGMDLTLEVKILSWL</sequence>
<feature type="chain" id="PRO_0000224682" description="UDP-N-acetylenolpyruvoylglucosamine reductase">
    <location>
        <begin position="1"/>
        <end position="296"/>
    </location>
</feature>
<feature type="domain" description="FAD-binding PCMH-type" evidence="1">
    <location>
        <begin position="18"/>
        <end position="189"/>
    </location>
</feature>
<feature type="active site" evidence="1">
    <location>
        <position position="166"/>
    </location>
</feature>
<feature type="active site" description="Proton donor" evidence="1">
    <location>
        <position position="218"/>
    </location>
</feature>
<feature type="active site" evidence="1">
    <location>
        <position position="289"/>
    </location>
</feature>
<comment type="function">
    <text evidence="1">Cell wall formation.</text>
</comment>
<comment type="catalytic activity">
    <reaction evidence="1">
        <text>UDP-N-acetyl-alpha-D-muramate + NADP(+) = UDP-N-acetyl-3-O-(1-carboxyvinyl)-alpha-D-glucosamine + NADPH + H(+)</text>
        <dbReference type="Rhea" id="RHEA:12248"/>
        <dbReference type="ChEBI" id="CHEBI:15378"/>
        <dbReference type="ChEBI" id="CHEBI:57783"/>
        <dbReference type="ChEBI" id="CHEBI:58349"/>
        <dbReference type="ChEBI" id="CHEBI:68483"/>
        <dbReference type="ChEBI" id="CHEBI:70757"/>
        <dbReference type="EC" id="1.3.1.98"/>
    </reaction>
</comment>
<comment type="cofactor">
    <cofactor evidence="1">
        <name>FAD</name>
        <dbReference type="ChEBI" id="CHEBI:57692"/>
    </cofactor>
</comment>
<comment type="pathway">
    <text evidence="1">Cell wall biogenesis; peptidoglycan biosynthesis.</text>
</comment>
<comment type="subcellular location">
    <subcellularLocation>
        <location evidence="1">Cytoplasm</location>
    </subcellularLocation>
</comment>
<comment type="similarity">
    <text evidence="1">Belongs to the MurB family.</text>
</comment>
<organism>
    <name type="scientific">Nitratidesulfovibrio vulgaris (strain ATCC 29579 / DSM 644 / CCUG 34227 / NCIMB 8303 / VKM B-1760 / Hildenborough)</name>
    <name type="common">Desulfovibrio vulgaris</name>
    <dbReference type="NCBI Taxonomy" id="882"/>
    <lineage>
        <taxon>Bacteria</taxon>
        <taxon>Pseudomonadati</taxon>
        <taxon>Thermodesulfobacteriota</taxon>
        <taxon>Desulfovibrionia</taxon>
        <taxon>Desulfovibrionales</taxon>
        <taxon>Desulfovibrionaceae</taxon>
        <taxon>Nitratidesulfovibrio</taxon>
    </lineage>
</organism>
<keyword id="KW-0131">Cell cycle</keyword>
<keyword id="KW-0132">Cell division</keyword>
<keyword id="KW-0133">Cell shape</keyword>
<keyword id="KW-0961">Cell wall biogenesis/degradation</keyword>
<keyword id="KW-0963">Cytoplasm</keyword>
<keyword id="KW-0274">FAD</keyword>
<keyword id="KW-0285">Flavoprotein</keyword>
<keyword id="KW-0521">NADP</keyword>
<keyword id="KW-0560">Oxidoreductase</keyword>
<keyword id="KW-0573">Peptidoglycan synthesis</keyword>
<keyword id="KW-1185">Reference proteome</keyword>
<accession>Q728V0</accession>
<proteinExistence type="inferred from homology"/>
<evidence type="ECO:0000255" key="1">
    <source>
        <dbReference type="HAMAP-Rule" id="MF_00037"/>
    </source>
</evidence>